<organism>
    <name type="scientific">Staphylococcus aureus</name>
    <dbReference type="NCBI Taxonomy" id="1280"/>
    <lineage>
        <taxon>Bacteria</taxon>
        <taxon>Bacillati</taxon>
        <taxon>Bacillota</taxon>
        <taxon>Bacilli</taxon>
        <taxon>Bacillales</taxon>
        <taxon>Staphylococcaceae</taxon>
        <taxon>Staphylococcus</taxon>
    </lineage>
</organism>
<keyword id="KW-0134">Cell wall</keyword>
<keyword id="KW-0349">Heme</keyword>
<keyword id="KW-0408">Iron</keyword>
<keyword id="KW-0479">Metal-binding</keyword>
<keyword id="KW-0572">Peptidoglycan-anchor</keyword>
<keyword id="KW-0964">Secreted</keyword>
<keyword id="KW-0732">Signal</keyword>
<feature type="signal peptide">
    <location>
        <begin position="1"/>
        <end position="46"/>
    </location>
</feature>
<feature type="chain" id="PRO_0000046082" description="Iron-regulated surface determinant protein A">
    <location>
        <begin position="47"/>
        <end position="320"/>
    </location>
</feature>
<feature type="propeptide" id="PRO_0000046083" description="Removed by sortase" evidence="6 11">
    <location>
        <begin position="321"/>
        <end position="354"/>
    </location>
</feature>
<feature type="domain" description="NEAT" evidence="5">
    <location>
        <begin position="62"/>
        <end position="184"/>
    </location>
</feature>
<feature type="region of interest" description="Disordered" evidence="7">
    <location>
        <begin position="188"/>
        <end position="318"/>
    </location>
</feature>
<feature type="short sequence motif" description="LPXTG sorting signal" evidence="6">
    <location>
        <begin position="317"/>
        <end position="321"/>
    </location>
</feature>
<feature type="compositionally biased region" description="Low complexity" evidence="7">
    <location>
        <begin position="203"/>
        <end position="214"/>
    </location>
</feature>
<feature type="compositionally biased region" description="Polar residues" evidence="7">
    <location>
        <begin position="226"/>
        <end position="268"/>
    </location>
</feature>
<feature type="compositionally biased region" description="Polar residues" evidence="7">
    <location>
        <begin position="278"/>
        <end position="298"/>
    </location>
</feature>
<feature type="compositionally biased region" description="Basic and acidic residues" evidence="7">
    <location>
        <begin position="299"/>
        <end position="318"/>
    </location>
</feature>
<feature type="binding site" evidence="1">
    <location>
        <position position="75"/>
    </location>
    <ligand>
        <name>heme</name>
        <dbReference type="ChEBI" id="CHEBI:30413"/>
    </ligand>
</feature>
<feature type="binding site" evidence="1">
    <location>
        <position position="82"/>
    </location>
    <ligand>
        <name>heme</name>
        <dbReference type="ChEBI" id="CHEBI:30413"/>
    </ligand>
</feature>
<feature type="binding site" description="axial binding residue" evidence="4">
    <location>
        <position position="166"/>
    </location>
    <ligand>
        <name>heme</name>
        <dbReference type="ChEBI" id="CHEBI:30413"/>
    </ligand>
    <ligandPart>
        <name>Fe</name>
        <dbReference type="ChEBI" id="CHEBI:18248"/>
    </ligandPart>
</feature>
<feature type="modified residue" description="Pentaglycyl murein peptidoglycan amidated threonine" evidence="6">
    <location>
        <position position="320"/>
    </location>
</feature>
<gene>
    <name type="primary">isdA</name>
    <name type="synonym">frpA</name>
    <name type="synonym">sasE</name>
    <name type="synonym">stbA</name>
</gene>
<comment type="function">
    <text evidence="2 3 8 9">Cell wall-anchored surface receptor that participates in the extraction of heme from oxidized methemoglobin/metHb to enable growth on hemoglobin as a sole iron source (By similarity). Receives heme from IsdB and transfers it to IsdC (By similarity). Also plays a role in the inhibition of host immune response. Protects S.aureus against the bactericidal protease activity of apolactoferrin. Decreases bacterial cellular hydrophobicity, which renders S.aureus resistant to bactericidal human skin fatty acids as well as to beta-defensins and cathelicidin. Also binds fibronectin and chains B-beta and gamma of fibrinogen, promoting clumping of S.aureus with fibrinogen. Involved in adherence of S.aureus to human desquamated nasal epithelial cells and is required for nasal colonization (By similarity) (PubMed:15880095, PubMed:16544250).</text>
</comment>
<comment type="subunit">
    <text evidence="2 3">Monomer. Interacts with IsdC (By similarity). Interacts with IsdB (By similarity).</text>
</comment>
<comment type="subcellular location">
    <subcellularLocation>
        <location evidence="2">Secreted</location>
        <location evidence="2">Cell wall</location>
        <topology evidence="2">Peptidoglycan-anchor</topology>
    </subcellularLocation>
    <text evidence="2">Encodes an LPXTG motif-containing sorting signal that targets to the cell wall, which is catalyzed by sortase A.</text>
</comment>
<comment type="induction">
    <text evidence="1">Repressed by fur in the presence of iron.</text>
</comment>
<comment type="domain">
    <text evidence="1">The NEAT domain is responsible for binding Fe(3+) and Fe(2+) heme and fibrinogen. The NEAT domain is an inhibitor of apolactoferrin activity, while the C-domain confers resistance to bovine lactoferricin (By similarity).</text>
</comment>
<comment type="biotechnology">
    <text evidence="9">Vaccination with IsdA may prevent S.aureus nasal carriage and reduce the prevalence of human disease. A combined vaccine containing IsdA, IsdB, SdrD and SdrE afforded significant protection in mice against a lethal challenge with S.aureus Newman or any of the clinical isolates NRS252, N315, NRS248, USA100 and USA400. The immune response elicited by the combined vaccine is greater than the one elicited by its individual components.</text>
</comment>
<comment type="miscellaneous">
    <text>Expressed in vivo during infection or colonization by S.aureus.</text>
</comment>
<comment type="similarity">
    <text evidence="10">Belongs to the IsdA family.</text>
</comment>
<sequence>MTKHYLNSKYQSEQRSSAMKKITMGTASIILGSLVYIGADSQQVNAATEATNATNNQSTQVSQATSQPINFQVQKDGSSEKSHMDDYMQHPGKVIKQNNKYYFQAVLNNASFWKEYKFYNANNQELATTVVNDDKKADTRTINVAVEPGYKSLTTKVHIVVPQINYNHRYTTHLEFEKAIPTLADAAKPNNVKPVQPKPAQPKTPTEQTKPVQPKVEKVKPAVTAPSKNENRQTTKVVSSEATKDQSQTQSARTVKTTQTAQDQNKVQTPVKDVATAKSESNNQAVSDNKSQQTNKVTKQNEVHKQGPSKDSKAKELPKTGLTSVDNFISTVAFATLALLGSLSLLLFKRKESK</sequence>
<name>ISDA_STAAU</name>
<reference key="1">
    <citation type="submission" date="2000-05" db="EMBL/GenBank/DDBJ databases">
        <title>Staphylococcal cell wall-anchored surface protein.</title>
        <authorList>
            <person name="Sakata N."/>
            <person name="Wadstrom T."/>
            <person name="Yamazaki K."/>
            <person name="Mukai T."/>
        </authorList>
    </citation>
    <scope>NUCLEOTIDE SEQUENCE [GENOMIC DNA]</scope>
    <source>
        <strain>ATCC 12598 / Cowan 1 / DSM 20372 / NCIMB 11787 / NCTC 8530</strain>
    </source>
</reference>
<reference key="2">
    <citation type="journal article" date="2002" name="Mol. Microbiol.">
        <title>Transferrin binding in Staphylococcus aureus: involvement of a cell wall-anchored protein.</title>
        <authorList>
            <person name="Taylor J.M."/>
            <person name="Heinrichs D.E."/>
        </authorList>
    </citation>
    <scope>INTERACTION WITH TRANSFERRIN</scope>
    <scope>SUBCELLULAR LOCATION</scope>
    <source>
        <strain>ATCC 6538P / DSM 346 / JCM 2151 / NBRC 12732 / NCIMB 8625 / NCTC 7447 / NRRL B-313 / FDA 209P</strain>
    </source>
</reference>
<reference key="3">
    <citation type="journal article" date="2002" name="Proc. Natl. Acad. Sci. U.S.A.">
        <title>An iron-regulated sortase anchors a class of surface protein during Staphylococcus aureus pathogenesis.</title>
        <authorList>
            <person name="Mazmanian S.K."/>
            <person name="Ton-That H."/>
            <person name="Su K."/>
            <person name="Schneewind O."/>
        </authorList>
    </citation>
    <scope>SUBCELLULAR LOCATION</scope>
    <scope>PROCESSING BY SORTASE A</scope>
    <source>
        <strain>RN4220</strain>
    </source>
</reference>
<reference key="4">
    <citation type="journal article" date="2005" name="J. Microbiol.">
        <title>Staphylococcus aureus siderophore-mediated iron-acquisition system plays a dominant and essential role in the utilization of transferrin-bound iron.</title>
        <authorList>
            <person name="Park R.-Y."/>
            <person name="Sun H.-Y."/>
            <person name="Choi M.-H."/>
            <person name="Bai Y.-H."/>
            <person name="Shin S.-H."/>
        </authorList>
    </citation>
    <scope>ROLE IN IRON ACQUISITION FROM TRANSFERRIN</scope>
    <source>
        <strain>ATCC 6538P / DSM 346 / JCM 2151 / NBRC 12732 / NCIMB 8625 / NCTC 7447 / NRRL B-313 / FDA 209P</strain>
    </source>
</reference>
<reference key="5">
    <citation type="journal article" date="2006" name="J. Infect. Dis.">
        <title>Identification of in vivo-expressed antigens of Staphylococcus aureus and their use in vaccinations for protection against nasal carriage.</title>
        <authorList>
            <person name="Clarke S.R."/>
            <person name="Brummell K.J."/>
            <person name="Horsburgh M.J."/>
            <person name="McDowell P.W."/>
            <person name="Mohamad S.A.S."/>
            <person name="Stapleton M.R."/>
            <person name="Acevedo J."/>
            <person name="Read R.C."/>
            <person name="Day N.P.J."/>
            <person name="Peacock S.J."/>
            <person name="Mond J.J."/>
            <person name="Kokai-Kun J.F."/>
            <person name="Foster S.J."/>
        </authorList>
    </citation>
    <scope>FUNCTION</scope>
    <scope>BIOTECHNOLOGY</scope>
</reference>
<proteinExistence type="evidence at protein level"/>
<evidence type="ECO:0000250" key="1"/>
<evidence type="ECO:0000250" key="2">
    <source>
        <dbReference type="UniProtKB" id="A6QG31"/>
    </source>
</evidence>
<evidence type="ECO:0000250" key="3">
    <source>
        <dbReference type="UniProtKB" id="Q7A152"/>
    </source>
</evidence>
<evidence type="ECO:0000250" key="4">
    <source>
        <dbReference type="UniProtKB" id="Q7A655"/>
    </source>
</evidence>
<evidence type="ECO:0000255" key="5">
    <source>
        <dbReference type="PROSITE-ProRule" id="PRU00337"/>
    </source>
</evidence>
<evidence type="ECO:0000255" key="6">
    <source>
        <dbReference type="PROSITE-ProRule" id="PRU00477"/>
    </source>
</evidence>
<evidence type="ECO:0000256" key="7">
    <source>
        <dbReference type="SAM" id="MobiDB-lite"/>
    </source>
</evidence>
<evidence type="ECO:0000269" key="8">
    <source>
    </source>
</evidence>
<evidence type="ECO:0000269" key="9">
    <source>
    </source>
</evidence>
<evidence type="ECO:0000305" key="10"/>
<evidence type="ECO:0000305" key="11">
    <source>
    </source>
</evidence>
<accession>P0C1S5</accession>
<accession>Q9KW67</accession>
<dbReference type="EMBL" id="AB042826">
    <property type="protein sequence ID" value="BAA97049.1"/>
    <property type="molecule type" value="Genomic_DNA"/>
</dbReference>
<dbReference type="RefSeq" id="WP_000160848.1">
    <property type="nucleotide sequence ID" value="NZ_WKIW01000014.1"/>
</dbReference>
<dbReference type="SMR" id="P0C1S5"/>
<dbReference type="TCDB" id="9.A.39.1.2">
    <property type="family name" value="the gram-positive bacterial hemoglobin receptor (isd) family"/>
</dbReference>
<dbReference type="TCDB" id="9.A.39.1.3">
    <property type="family name" value="the gram-positive bacterial hemoglobin receptor (isd) family"/>
</dbReference>
<dbReference type="PRO" id="PR:P0C1S5"/>
<dbReference type="GO" id="GO:0005576">
    <property type="term" value="C:extracellular region"/>
    <property type="evidence" value="ECO:0007669"/>
    <property type="project" value="UniProtKB-KW"/>
</dbReference>
<dbReference type="GO" id="GO:0046872">
    <property type="term" value="F:metal ion binding"/>
    <property type="evidence" value="ECO:0007669"/>
    <property type="project" value="UniProtKB-KW"/>
</dbReference>
<dbReference type="CDD" id="cd06920">
    <property type="entry name" value="NEAT"/>
    <property type="match status" value="1"/>
</dbReference>
<dbReference type="Gene3D" id="2.60.40.1850">
    <property type="match status" value="1"/>
</dbReference>
<dbReference type="InterPro" id="IPR050436">
    <property type="entry name" value="IsdA"/>
</dbReference>
<dbReference type="InterPro" id="IPR019931">
    <property type="entry name" value="LPXTG_anchor"/>
</dbReference>
<dbReference type="InterPro" id="IPR006635">
    <property type="entry name" value="NEAT_dom"/>
</dbReference>
<dbReference type="InterPro" id="IPR037250">
    <property type="entry name" value="NEAT_dom_sf"/>
</dbReference>
<dbReference type="NCBIfam" id="TIGR01167">
    <property type="entry name" value="LPXTG_anchor"/>
    <property type="match status" value="1"/>
</dbReference>
<dbReference type="PANTHER" id="PTHR37824">
    <property type="entry name" value="IRON-REGULATED SURFACE DETERMINANT PROTEIN C"/>
    <property type="match status" value="1"/>
</dbReference>
<dbReference type="PANTHER" id="PTHR37824:SF1">
    <property type="entry name" value="IRON-REGULATED SURFACE DETERMINANT PROTEIN C"/>
    <property type="match status" value="1"/>
</dbReference>
<dbReference type="Pfam" id="PF00746">
    <property type="entry name" value="Gram_pos_anchor"/>
    <property type="match status" value="1"/>
</dbReference>
<dbReference type="Pfam" id="PF05031">
    <property type="entry name" value="NEAT"/>
    <property type="match status" value="1"/>
</dbReference>
<dbReference type="SMART" id="SM00725">
    <property type="entry name" value="NEAT"/>
    <property type="match status" value="1"/>
</dbReference>
<dbReference type="SUPFAM" id="SSF158911">
    <property type="entry name" value="NEAT domain-like"/>
    <property type="match status" value="1"/>
</dbReference>
<dbReference type="PROSITE" id="PS50847">
    <property type="entry name" value="GRAM_POS_ANCHORING"/>
    <property type="match status" value="1"/>
</dbReference>
<dbReference type="PROSITE" id="PS50978">
    <property type="entry name" value="NEAT"/>
    <property type="match status" value="1"/>
</dbReference>
<protein>
    <recommendedName>
        <fullName>Iron-regulated surface determinant protein A</fullName>
    </recommendedName>
    <alternativeName>
        <fullName>Fur-regulated protein A</fullName>
    </alternativeName>
    <alternativeName>
        <fullName>Staphylococcal transferrin-binding protein A</fullName>
    </alternativeName>
</protein>